<evidence type="ECO:0000250" key="1">
    <source>
        <dbReference type="UniProtKB" id="P91351"/>
    </source>
</evidence>
<evidence type="ECO:0000255" key="2">
    <source>
        <dbReference type="HAMAP-Rule" id="MF_03100"/>
    </source>
</evidence>
<evidence type="ECO:0000256" key="3">
    <source>
        <dbReference type="SAM" id="MobiDB-lite"/>
    </source>
</evidence>
<evidence type="ECO:0000312" key="4">
    <source>
        <dbReference type="WormBase" id="CBG23741"/>
    </source>
</evidence>
<feature type="chain" id="PRO_0000383750" description="Structure-specific endonuclease subunit SLX1 homolog">
    <location>
        <begin position="1"/>
        <end position="439"/>
    </location>
</feature>
<feature type="domain" description="GIY-YIG" evidence="2">
    <location>
        <begin position="166"/>
        <end position="253"/>
    </location>
</feature>
<feature type="zinc finger region" description="SLX1-type" evidence="2">
    <location>
        <begin position="335"/>
        <end position="390"/>
    </location>
</feature>
<feature type="region of interest" description="Disordered" evidence="3">
    <location>
        <begin position="1"/>
        <end position="28"/>
    </location>
</feature>
<feature type="region of interest" description="Disordered" evidence="3">
    <location>
        <begin position="117"/>
        <end position="140"/>
    </location>
</feature>
<feature type="compositionally biased region" description="Basic and acidic residues" evidence="3">
    <location>
        <begin position="125"/>
        <end position="136"/>
    </location>
</feature>
<reference key="1">
    <citation type="journal article" date="2003" name="PLoS Biol.">
        <title>The genome sequence of Caenorhabditis briggsae: a platform for comparative genomics.</title>
        <authorList>
            <person name="Stein L.D."/>
            <person name="Bao Z."/>
            <person name="Blasiar D."/>
            <person name="Blumenthal T."/>
            <person name="Brent M.R."/>
            <person name="Chen N."/>
            <person name="Chinwalla A."/>
            <person name="Clarke L."/>
            <person name="Clee C."/>
            <person name="Coghlan A."/>
            <person name="Coulson A."/>
            <person name="D'Eustachio P."/>
            <person name="Fitch D.H.A."/>
            <person name="Fulton L.A."/>
            <person name="Fulton R.E."/>
            <person name="Griffiths-Jones S."/>
            <person name="Harris T.W."/>
            <person name="Hillier L.W."/>
            <person name="Kamath R."/>
            <person name="Kuwabara P.E."/>
            <person name="Mardis E.R."/>
            <person name="Marra M.A."/>
            <person name="Miner T.L."/>
            <person name="Minx P."/>
            <person name="Mullikin J.C."/>
            <person name="Plumb R.W."/>
            <person name="Rogers J."/>
            <person name="Schein J.E."/>
            <person name="Sohrmann M."/>
            <person name="Spieth J."/>
            <person name="Stajich J.E."/>
            <person name="Wei C."/>
            <person name="Willey D."/>
            <person name="Wilson R.K."/>
            <person name="Durbin R.M."/>
            <person name="Waterston R.H."/>
        </authorList>
    </citation>
    <scope>NUCLEOTIDE SEQUENCE [LARGE SCALE GENOMIC DNA]</scope>
    <source>
        <strain>AF16</strain>
    </source>
</reference>
<comment type="function">
    <text evidence="1 2">Catalytic subunit of a heterodimeric structure-specific endonuclease that resolves DNA secondary structures generated during DNA repair and recombination. Has endonuclease activity towards branched DNA substrates, introducing single-strand cuts in duplex DNA close to junctions with ss-DNA (Potential). Has a preference for replication forks over 5' flap structures or Holliday junctions and shows much lower activity toward 3' flap structures (By similarity). Required for proper crossover distribution through inhibition of crossover formation at the central region of chromosomes (By similarity).</text>
</comment>
<comment type="cofactor">
    <cofactor evidence="2">
        <name>a divalent metal cation</name>
        <dbReference type="ChEBI" id="CHEBI:60240"/>
    </cofactor>
</comment>
<comment type="subunit">
    <text evidence="2">Forms a heterodimer with him-18/slx-4.</text>
</comment>
<comment type="subcellular location">
    <subcellularLocation>
        <location evidence="2">Nucleus</location>
    </subcellularLocation>
</comment>
<comment type="domain">
    <text evidence="1">Both the N- and C-terminal regions are required for interaction with him-18.</text>
</comment>
<comment type="similarity">
    <text evidence="2">Belongs to the SLX1 family.</text>
</comment>
<sequence>METFILSSDSDDDCPPPPKRRSIEGVPKSFDGDKKMRFSFDVTRDIILEDSEAPCSSNNIFTPSFRRDSNKTLLKTPVSLRRRSRSMNCMTPIVDTINEPPINQVCSAFVQKEIQLDDDDDDEKESSTEHADDDLNLRALLSPEKKKRKEKVDKRRPFGVEEVQNEFYGVYCLISRSERQCYKNRCYIGYTVDPNRRIMQHNGGRFKGGAKKTDSRGPWDMVCVVHGFPNHVAALRFEWAWQNPAVSKSLKEKQLKKERKETPFAYQLRIACELMNSEAFSRFALTFRWLNTKEELPFPISCTPPNHVKLRYGKVKKEMSLVPAKSADYVAMGECRLCGKDIEKLWGLVRCISQSCHSHFHSKCLAEHGLKNKNEYADQIYPLKSNCPICGHFYLWGDVVREQRRIIKVSTKCAEEFRNKVVRKDLPHREISSRLRLKK</sequence>
<accession>A8WJ66</accession>
<keyword id="KW-0227">DNA damage</keyword>
<keyword id="KW-0233">DNA recombination</keyword>
<keyword id="KW-0234">DNA repair</keyword>
<keyword id="KW-0255">Endonuclease</keyword>
<keyword id="KW-0378">Hydrolase</keyword>
<keyword id="KW-0479">Metal-binding</keyword>
<keyword id="KW-0540">Nuclease</keyword>
<keyword id="KW-0539">Nucleus</keyword>
<keyword id="KW-1185">Reference proteome</keyword>
<keyword id="KW-0862">Zinc</keyword>
<keyword id="KW-0863">Zinc-finger</keyword>
<protein>
    <recommendedName>
        <fullName evidence="2">Structure-specific endonuclease subunit SLX1 homolog</fullName>
        <ecNumber evidence="2">3.1.-.-</ecNumber>
    </recommendedName>
    <alternativeName>
        <fullName evidence="2">GIY-YIG domain-containing protein 1</fullName>
    </alternativeName>
</protein>
<proteinExistence type="inferred from homology"/>
<dbReference type="EC" id="3.1.-.-" evidence="2"/>
<dbReference type="EMBL" id="HE601040">
    <property type="protein sequence ID" value="CAP20508.2"/>
    <property type="molecule type" value="Genomic_DNA"/>
</dbReference>
<dbReference type="SMR" id="A8WJ66"/>
<dbReference type="FunCoup" id="A8WJ66">
    <property type="interactions" value="1161"/>
</dbReference>
<dbReference type="STRING" id="6238.A8WJ66"/>
<dbReference type="WormBase" id="CBG23741">
    <property type="protein sequence ID" value="CBP39087"/>
    <property type="gene ID" value="WBGene00042011"/>
    <property type="gene designation" value="Cbr-slx-1"/>
</dbReference>
<dbReference type="eggNOG" id="KOG3005">
    <property type="taxonomic scope" value="Eukaryota"/>
</dbReference>
<dbReference type="HOGENOM" id="CLU_052232_0_0_1"/>
<dbReference type="InParanoid" id="A8WJ66"/>
<dbReference type="OMA" id="SHFHSKC"/>
<dbReference type="Proteomes" id="UP000008549">
    <property type="component" value="Unassembled WGS sequence"/>
</dbReference>
<dbReference type="GO" id="GO:0033557">
    <property type="term" value="C:Slx1-Slx4 complex"/>
    <property type="evidence" value="ECO:0000318"/>
    <property type="project" value="GO_Central"/>
</dbReference>
<dbReference type="GO" id="GO:0017108">
    <property type="term" value="F:5'-flap endonuclease activity"/>
    <property type="evidence" value="ECO:0000318"/>
    <property type="project" value="GO_Central"/>
</dbReference>
<dbReference type="GO" id="GO:0008821">
    <property type="term" value="F:crossover junction DNA endonuclease activity"/>
    <property type="evidence" value="ECO:0000318"/>
    <property type="project" value="GO_Central"/>
</dbReference>
<dbReference type="GO" id="GO:0008270">
    <property type="term" value="F:zinc ion binding"/>
    <property type="evidence" value="ECO:0007669"/>
    <property type="project" value="UniProtKB-KW"/>
</dbReference>
<dbReference type="GO" id="GO:0000724">
    <property type="term" value="P:double-strand break repair via homologous recombination"/>
    <property type="evidence" value="ECO:0000318"/>
    <property type="project" value="GO_Central"/>
</dbReference>
<dbReference type="CDD" id="cd10455">
    <property type="entry name" value="GIY-YIG_SLX1"/>
    <property type="match status" value="1"/>
</dbReference>
<dbReference type="FunFam" id="3.30.40.10:FF:001251">
    <property type="entry name" value="Structure-specific endonuclease subunit SLX1 homolog"/>
    <property type="match status" value="1"/>
</dbReference>
<dbReference type="FunFam" id="3.40.1440.10:FF:000008">
    <property type="entry name" value="Structure-specific endonuclease subunit SLX1 homolog"/>
    <property type="match status" value="1"/>
</dbReference>
<dbReference type="Gene3D" id="3.40.1440.10">
    <property type="entry name" value="GIY-YIG endonuclease"/>
    <property type="match status" value="1"/>
</dbReference>
<dbReference type="Gene3D" id="3.30.40.10">
    <property type="entry name" value="Zinc/RING finger domain, C3HC4 (zinc finger)"/>
    <property type="match status" value="1"/>
</dbReference>
<dbReference type="HAMAP" id="MF_03100">
    <property type="entry name" value="Endonuc_su_Slx1"/>
    <property type="match status" value="1"/>
</dbReference>
<dbReference type="InterPro" id="IPR000305">
    <property type="entry name" value="GIY-YIG_endonuc"/>
</dbReference>
<dbReference type="InterPro" id="IPR035901">
    <property type="entry name" value="GIY-YIG_endonuc_sf"/>
</dbReference>
<dbReference type="InterPro" id="IPR027520">
    <property type="entry name" value="Slx1"/>
</dbReference>
<dbReference type="InterPro" id="IPR048749">
    <property type="entry name" value="SLX1_C"/>
</dbReference>
<dbReference type="InterPro" id="IPR050381">
    <property type="entry name" value="SLX1_endonuclease"/>
</dbReference>
<dbReference type="InterPro" id="IPR013083">
    <property type="entry name" value="Znf_RING/FYVE/PHD"/>
</dbReference>
<dbReference type="PANTHER" id="PTHR20208">
    <property type="entry name" value="STRUCTURE-SPECIFIC ENDONUCLEASE SUBUNIT SLX1"/>
    <property type="match status" value="1"/>
</dbReference>
<dbReference type="PANTHER" id="PTHR20208:SF10">
    <property type="entry name" value="STRUCTURE-SPECIFIC ENDONUCLEASE SUBUNIT SLX1"/>
    <property type="match status" value="1"/>
</dbReference>
<dbReference type="Pfam" id="PF01541">
    <property type="entry name" value="GIY-YIG"/>
    <property type="match status" value="1"/>
</dbReference>
<dbReference type="Pfam" id="PF21202">
    <property type="entry name" value="SLX1_C"/>
    <property type="match status" value="1"/>
</dbReference>
<dbReference type="SMART" id="SM00465">
    <property type="entry name" value="GIYc"/>
    <property type="match status" value="1"/>
</dbReference>
<dbReference type="PROSITE" id="PS50164">
    <property type="entry name" value="GIY_YIG"/>
    <property type="match status" value="1"/>
</dbReference>
<name>SLX1_CAEBR</name>
<gene>
    <name evidence="4" type="primary">slx-1</name>
    <name evidence="2" type="synonym">giyd-1</name>
    <name evidence="4" type="ORF">CBG23741</name>
</gene>
<organism>
    <name type="scientific">Caenorhabditis briggsae</name>
    <dbReference type="NCBI Taxonomy" id="6238"/>
    <lineage>
        <taxon>Eukaryota</taxon>
        <taxon>Metazoa</taxon>
        <taxon>Ecdysozoa</taxon>
        <taxon>Nematoda</taxon>
        <taxon>Chromadorea</taxon>
        <taxon>Rhabditida</taxon>
        <taxon>Rhabditina</taxon>
        <taxon>Rhabditomorpha</taxon>
        <taxon>Rhabditoidea</taxon>
        <taxon>Rhabditidae</taxon>
        <taxon>Peloderinae</taxon>
        <taxon>Caenorhabditis</taxon>
    </lineage>
</organism>